<feature type="chain" id="PRO_0000382516" description="Probable cytosolic iron-sulfur protein assembly protein 1">
    <location>
        <begin position="1"/>
        <end position="333"/>
    </location>
</feature>
<feature type="repeat" description="WD 1">
    <location>
        <begin position="12"/>
        <end position="50"/>
    </location>
</feature>
<feature type="repeat" description="WD 2">
    <location>
        <begin position="55"/>
        <end position="94"/>
    </location>
</feature>
<feature type="repeat" description="WD 3">
    <location>
        <begin position="107"/>
        <end position="146"/>
    </location>
</feature>
<feature type="repeat" description="WD 4">
    <location>
        <begin position="153"/>
        <end position="192"/>
    </location>
</feature>
<feature type="repeat" description="WD 5">
    <location>
        <begin position="197"/>
        <end position="238"/>
    </location>
</feature>
<feature type="repeat" description="WD 6">
    <location>
        <begin position="250"/>
        <end position="288"/>
    </location>
</feature>
<feature type="repeat" description="WD 7">
    <location>
        <begin position="298"/>
        <end position="333"/>
    </location>
</feature>
<gene>
    <name evidence="1" type="primary">CIA1</name>
    <name type="ordered locus">KLLA0E21781g</name>
</gene>
<dbReference type="EMBL" id="CR382125">
    <property type="protein sequence ID" value="CAH00024.1"/>
    <property type="molecule type" value="Genomic_DNA"/>
</dbReference>
<dbReference type="RefSeq" id="XP_454937.1">
    <property type="nucleotide sequence ID" value="XM_454937.1"/>
</dbReference>
<dbReference type="SMR" id="Q6CMA2"/>
<dbReference type="FunCoup" id="Q6CMA2">
    <property type="interactions" value="84"/>
</dbReference>
<dbReference type="STRING" id="284590.Q6CMA2"/>
<dbReference type="PaxDb" id="284590-Q6CMA2"/>
<dbReference type="KEGG" id="kla:KLLA0_E21781g"/>
<dbReference type="eggNOG" id="KOG0645">
    <property type="taxonomic scope" value="Eukaryota"/>
</dbReference>
<dbReference type="HOGENOM" id="CLU_000288_57_8_1"/>
<dbReference type="InParanoid" id="Q6CMA2"/>
<dbReference type="OMA" id="MPILASC"/>
<dbReference type="Proteomes" id="UP000000598">
    <property type="component" value="Chromosome E"/>
</dbReference>
<dbReference type="GO" id="GO:0097361">
    <property type="term" value="C:cytosolic [4Fe-4S] assembly targeting complex"/>
    <property type="evidence" value="ECO:0007669"/>
    <property type="project" value="InterPro"/>
</dbReference>
<dbReference type="GO" id="GO:0005634">
    <property type="term" value="C:nucleus"/>
    <property type="evidence" value="ECO:0007669"/>
    <property type="project" value="UniProtKB-SubCell"/>
</dbReference>
<dbReference type="GO" id="GO:0016226">
    <property type="term" value="P:iron-sulfur cluster assembly"/>
    <property type="evidence" value="ECO:0007669"/>
    <property type="project" value="UniProtKB-UniRule"/>
</dbReference>
<dbReference type="CDD" id="cd00200">
    <property type="entry name" value="WD40"/>
    <property type="match status" value="1"/>
</dbReference>
<dbReference type="FunFam" id="2.130.10.10:FF:000705">
    <property type="entry name" value="Probable cytosolic iron-sulfur protein assembly protein 1"/>
    <property type="match status" value="1"/>
</dbReference>
<dbReference type="Gene3D" id="2.130.10.10">
    <property type="entry name" value="YVTN repeat-like/Quinoprotein amine dehydrogenase"/>
    <property type="match status" value="1"/>
</dbReference>
<dbReference type="HAMAP" id="MF_03037">
    <property type="entry name" value="ciao1"/>
    <property type="match status" value="1"/>
</dbReference>
<dbReference type="InterPro" id="IPR028608">
    <property type="entry name" value="CIAO1/Cia1"/>
</dbReference>
<dbReference type="InterPro" id="IPR020472">
    <property type="entry name" value="G-protein_beta_WD-40_rep"/>
</dbReference>
<dbReference type="InterPro" id="IPR015943">
    <property type="entry name" value="WD40/YVTN_repeat-like_dom_sf"/>
</dbReference>
<dbReference type="InterPro" id="IPR036322">
    <property type="entry name" value="WD40_repeat_dom_sf"/>
</dbReference>
<dbReference type="InterPro" id="IPR001680">
    <property type="entry name" value="WD40_rpt"/>
</dbReference>
<dbReference type="PANTHER" id="PTHR19920:SF0">
    <property type="entry name" value="CYTOSOLIC IRON-SULFUR PROTEIN ASSEMBLY PROTEIN CIAO1-RELATED"/>
    <property type="match status" value="1"/>
</dbReference>
<dbReference type="PANTHER" id="PTHR19920">
    <property type="entry name" value="WD40 PROTEIN CIAO1"/>
    <property type="match status" value="1"/>
</dbReference>
<dbReference type="Pfam" id="PF00400">
    <property type="entry name" value="WD40"/>
    <property type="match status" value="6"/>
</dbReference>
<dbReference type="PRINTS" id="PR00320">
    <property type="entry name" value="GPROTEINBRPT"/>
</dbReference>
<dbReference type="SMART" id="SM00320">
    <property type="entry name" value="WD40"/>
    <property type="match status" value="7"/>
</dbReference>
<dbReference type="SUPFAM" id="SSF50978">
    <property type="entry name" value="WD40 repeat-like"/>
    <property type="match status" value="1"/>
</dbReference>
<dbReference type="PROSITE" id="PS00678">
    <property type="entry name" value="WD_REPEATS_1"/>
    <property type="match status" value="1"/>
</dbReference>
<dbReference type="PROSITE" id="PS50082">
    <property type="entry name" value="WD_REPEATS_2"/>
    <property type="match status" value="5"/>
</dbReference>
<dbReference type="PROSITE" id="PS50294">
    <property type="entry name" value="WD_REPEATS_REGION"/>
    <property type="match status" value="1"/>
</dbReference>
<proteinExistence type="inferred from homology"/>
<reference key="1">
    <citation type="journal article" date="2004" name="Nature">
        <title>Genome evolution in yeasts.</title>
        <authorList>
            <person name="Dujon B."/>
            <person name="Sherman D."/>
            <person name="Fischer G."/>
            <person name="Durrens P."/>
            <person name="Casaregola S."/>
            <person name="Lafontaine I."/>
            <person name="de Montigny J."/>
            <person name="Marck C."/>
            <person name="Neuveglise C."/>
            <person name="Talla E."/>
            <person name="Goffard N."/>
            <person name="Frangeul L."/>
            <person name="Aigle M."/>
            <person name="Anthouard V."/>
            <person name="Babour A."/>
            <person name="Barbe V."/>
            <person name="Barnay S."/>
            <person name="Blanchin S."/>
            <person name="Beckerich J.-M."/>
            <person name="Beyne E."/>
            <person name="Bleykasten C."/>
            <person name="Boisrame A."/>
            <person name="Boyer J."/>
            <person name="Cattolico L."/>
            <person name="Confanioleri F."/>
            <person name="de Daruvar A."/>
            <person name="Despons L."/>
            <person name="Fabre E."/>
            <person name="Fairhead C."/>
            <person name="Ferry-Dumazet H."/>
            <person name="Groppi A."/>
            <person name="Hantraye F."/>
            <person name="Hennequin C."/>
            <person name="Jauniaux N."/>
            <person name="Joyet P."/>
            <person name="Kachouri R."/>
            <person name="Kerrest A."/>
            <person name="Koszul R."/>
            <person name="Lemaire M."/>
            <person name="Lesur I."/>
            <person name="Ma L."/>
            <person name="Muller H."/>
            <person name="Nicaud J.-M."/>
            <person name="Nikolski M."/>
            <person name="Oztas S."/>
            <person name="Ozier-Kalogeropoulos O."/>
            <person name="Pellenz S."/>
            <person name="Potier S."/>
            <person name="Richard G.-F."/>
            <person name="Straub M.-L."/>
            <person name="Suleau A."/>
            <person name="Swennen D."/>
            <person name="Tekaia F."/>
            <person name="Wesolowski-Louvel M."/>
            <person name="Westhof E."/>
            <person name="Wirth B."/>
            <person name="Zeniou-Meyer M."/>
            <person name="Zivanovic Y."/>
            <person name="Bolotin-Fukuhara M."/>
            <person name="Thierry A."/>
            <person name="Bouchier C."/>
            <person name="Caudron B."/>
            <person name="Scarpelli C."/>
            <person name="Gaillardin C."/>
            <person name="Weissenbach J."/>
            <person name="Wincker P."/>
            <person name="Souciet J.-L."/>
        </authorList>
    </citation>
    <scope>NUCLEOTIDE SEQUENCE [LARGE SCALE GENOMIC DNA]</scope>
    <source>
        <strain>ATCC 8585 / CBS 2359 / DSM 70799 / NBRC 1267 / NRRL Y-1140 / WM37</strain>
    </source>
</reference>
<keyword id="KW-0963">Cytoplasm</keyword>
<keyword id="KW-0539">Nucleus</keyword>
<keyword id="KW-1185">Reference proteome</keyword>
<keyword id="KW-0677">Repeat</keyword>
<keyword id="KW-0853">WD repeat</keyword>
<name>CIAO1_KLULA</name>
<organism>
    <name type="scientific">Kluyveromyces lactis (strain ATCC 8585 / CBS 2359 / DSM 70799 / NBRC 1267 / NRRL Y-1140 / WM37)</name>
    <name type="common">Yeast</name>
    <name type="synonym">Candida sphaerica</name>
    <dbReference type="NCBI Taxonomy" id="284590"/>
    <lineage>
        <taxon>Eukaryota</taxon>
        <taxon>Fungi</taxon>
        <taxon>Dikarya</taxon>
        <taxon>Ascomycota</taxon>
        <taxon>Saccharomycotina</taxon>
        <taxon>Saccharomycetes</taxon>
        <taxon>Saccharomycetales</taxon>
        <taxon>Saccharomycetaceae</taxon>
        <taxon>Kluyveromyces</taxon>
    </lineage>
</organism>
<comment type="function">
    <text evidence="1">Essential component of the cytosolic iron-sulfur (Fe/S) protein assembly machinery. Required for the maturation of extramitochondrial Fe/S proteins.</text>
</comment>
<comment type="subunit">
    <text evidence="1">Interacts with NAR1.</text>
</comment>
<comment type="subcellular location">
    <subcellularLocation>
        <location evidence="1">Cytoplasm</location>
    </subcellularLocation>
    <subcellularLocation>
        <location evidence="1">Nucleus</location>
    </subcellularLocation>
    <text evidence="1">Preferentially localized to the nucleus.</text>
</comment>
<comment type="similarity">
    <text evidence="1">Belongs to the WD repeat CIA1 family.</text>
</comment>
<protein>
    <recommendedName>
        <fullName evidence="1">Probable cytosolic iron-sulfur protein assembly protein 1</fullName>
    </recommendedName>
</protein>
<evidence type="ECO:0000255" key="1">
    <source>
        <dbReference type="HAMAP-Rule" id="MF_03037"/>
    </source>
</evidence>
<accession>Q6CMA2</accession>
<sequence>MAGLKLLKSLALHDDKCWSVDVNNGGIMATGSTDRKIKLVDIRSFQIIEELDDTAHKKTVRSVAWRPHSNILAAGSFDSTVSIWGKDDDGYNDENDLETELLAIIEGHENEIKCVAWSHDGELLATCSRDKSVWIWEADEMGEEFECISVLQEHSQDVKHVIWHQSLPLLASSSYDDTVRIWKDCDDDWECCAVLNGHEGTVWSSDFEKSNSNVRLCSGSDDGTVRIWCLEDDNGEYEQEWIQESILPKAHTRAVYSVNWSPKGYIASTGSDGRLVIYKESEDGWIVECIHELTHGVYETNMVKWVEYGSKDVILLITAGDDGHVNVWKFDEN</sequence>